<proteinExistence type="evidence at transcript level"/>
<sequence length="44" mass="4784">MFELSSILIRGGGGVLIVLILLLWIVDENCTDAKAMAYNINCTV</sequence>
<keyword id="KW-0244">Early protein</keyword>
<keyword id="KW-0472">Membrane</keyword>
<keyword id="KW-1185">Reference proteome</keyword>
<keyword id="KW-0812">Transmembrane</keyword>
<keyword id="KW-1133">Transmembrane helix</keyword>
<dbReference type="EMBL" id="U18466">
    <property type="status" value="NOT_ANNOTATED_CDS"/>
    <property type="molecule type" value="Genomic_DNA"/>
</dbReference>
<dbReference type="Proteomes" id="UP000000624">
    <property type="component" value="Segment"/>
</dbReference>
<dbReference type="GO" id="GO:0016020">
    <property type="term" value="C:membrane"/>
    <property type="evidence" value="ECO:0007669"/>
    <property type="project" value="UniProtKB-SubCell"/>
</dbReference>
<evidence type="ECO:0000255" key="1"/>
<evidence type="ECO:0000269" key="2">
    <source>
    </source>
</evidence>
<evidence type="ECO:0000303" key="3">
    <source>
    </source>
</evidence>
<gene>
    <name evidence="3" type="primary">pNG3</name>
</gene>
<reference key="1">
    <citation type="journal article" date="1995" name="Virology">
        <title>Analysis of the complete nucleotide sequence of African swine fever virus.</title>
        <authorList>
            <person name="Yanez R.J."/>
            <person name="Rodriguez J.M."/>
            <person name="Nogal M.L."/>
            <person name="Yuste L."/>
            <person name="Enriquez C."/>
            <person name="Rodriguez J.F."/>
            <person name="Vinuela E."/>
        </authorList>
    </citation>
    <scope>NUCLEOTIDE SEQUENCE [LARGE SCALE GENOMIC DNA]</scope>
</reference>
<reference key="2">
    <citation type="journal article" date="2020" name="J. Virol.">
        <title>The African Swine Fever Virus Transcriptome.</title>
        <authorList>
            <person name="Cackett G."/>
            <person name="Matelska D."/>
            <person name="Sykora M."/>
            <person name="Portugal R."/>
            <person name="Malecki M."/>
            <person name="Baehler J."/>
            <person name="Dixon L."/>
            <person name="Werner F."/>
        </authorList>
    </citation>
    <scope>IDENTIFICATION</scope>
    <scope>INDUCTION</scope>
</reference>
<organismHost>
    <name type="scientific">Ornithodoros</name>
    <name type="common">relapsing fever ticks</name>
    <dbReference type="NCBI Taxonomy" id="6937"/>
</organismHost>
<organismHost>
    <name type="scientific">Sus scrofa</name>
    <name type="common">Pig</name>
    <dbReference type="NCBI Taxonomy" id="9823"/>
</organismHost>
<feature type="chain" id="PRO_0000454436" description="Uncharacterized membrane protein pNG3">
    <location>
        <begin position="1"/>
        <end position="44"/>
    </location>
</feature>
<feature type="transmembrane region" description="Helical" evidence="1">
    <location>
        <begin position="6"/>
        <end position="26"/>
    </location>
</feature>
<name>PNG3_ASFB7</name>
<organism>
    <name type="scientific">African swine fever virus (strain Badajoz 1971 Vero-adapted)</name>
    <name type="common">Ba71V</name>
    <name type="synonym">ASFV</name>
    <dbReference type="NCBI Taxonomy" id="10498"/>
    <lineage>
        <taxon>Viruses</taxon>
        <taxon>Varidnaviria</taxon>
        <taxon>Bamfordvirae</taxon>
        <taxon>Nucleocytoviricota</taxon>
        <taxon>Pokkesviricetes</taxon>
        <taxon>Asfuvirales</taxon>
        <taxon>Asfarviridae</taxon>
        <taxon>Asfivirus</taxon>
        <taxon>African swine fever virus</taxon>
    </lineage>
</organism>
<accession>P0DTH9</accession>
<protein>
    <recommendedName>
        <fullName>Uncharacterized membrane protein pNG3</fullName>
    </recommendedName>
</protein>
<comment type="subcellular location">
    <subcellularLocation>
        <location evidence="1">Membrane</location>
        <topology evidence="1">Single-pass membrane protein</topology>
    </subcellularLocation>
</comment>
<comment type="induction">
    <text evidence="2">Expressed in the early phase of the viral replicative cycle.</text>
</comment>